<protein>
    <recommendedName>
        <fullName>Small integral membrane protein 12</fullName>
    </recommendedName>
</protein>
<comment type="subcellular location">
    <subcellularLocation>
        <location evidence="2">Membrane</location>
        <topology evidence="2">Single-pass membrane protein</topology>
    </subcellularLocation>
</comment>
<comment type="similarity">
    <text evidence="2">Belongs to the SMIM12 family.</text>
</comment>
<dbReference type="EMBL" id="AK075968">
    <property type="protein sequence ID" value="BAC36086.1"/>
    <property type="molecule type" value="mRNA"/>
</dbReference>
<dbReference type="EMBL" id="AK131915">
    <property type="protein sequence ID" value="BAE20870.1"/>
    <property type="molecule type" value="mRNA"/>
</dbReference>
<dbReference type="EMBL" id="AK141221">
    <property type="protein sequence ID" value="BAE24597.1"/>
    <property type="molecule type" value="mRNA"/>
</dbReference>
<dbReference type="EMBL" id="AL626768">
    <property type="status" value="NOT_ANNOTATED_CDS"/>
    <property type="molecule type" value="Genomic_DNA"/>
</dbReference>
<dbReference type="EMBL" id="CH466552">
    <property type="protein sequence ID" value="EDL30256.1"/>
    <property type="molecule type" value="Genomic_DNA"/>
</dbReference>
<dbReference type="EMBL" id="BC147067">
    <property type="protein sequence ID" value="AAI47068.1"/>
    <property type="molecule type" value="mRNA"/>
</dbReference>
<dbReference type="EMBL" id="BC147068">
    <property type="protein sequence ID" value="AAI47069.1"/>
    <property type="molecule type" value="mRNA"/>
</dbReference>
<dbReference type="CCDS" id="CCDS38883.1"/>
<dbReference type="RefSeq" id="NP_084528.1">
    <property type="nucleotide sequence ID" value="NM_030252.2"/>
</dbReference>
<dbReference type="SMR" id="Q78RX3"/>
<dbReference type="BioGRID" id="219772">
    <property type="interactions" value="1"/>
</dbReference>
<dbReference type="FunCoup" id="Q78RX3">
    <property type="interactions" value="33"/>
</dbReference>
<dbReference type="STRING" id="10090.ENSMUSP00000131941"/>
<dbReference type="PaxDb" id="10090-ENSMUSP00000131941"/>
<dbReference type="PeptideAtlas" id="Q78RX3"/>
<dbReference type="ProteomicsDB" id="261232"/>
<dbReference type="Pumba" id="Q78RX3"/>
<dbReference type="Antibodypedia" id="67344">
    <property type="antibodies" value="6 antibodies from 6 providers"/>
</dbReference>
<dbReference type="DNASU" id="80284"/>
<dbReference type="Ensembl" id="ENSMUST00000142029.2">
    <property type="protein sequence ID" value="ENSMUSP00000131941.2"/>
    <property type="gene ID" value="ENSMUSG00000042380.9"/>
</dbReference>
<dbReference type="GeneID" id="80284"/>
<dbReference type="KEGG" id="mmu:80284"/>
<dbReference type="UCSC" id="uc008uuq.1">
    <property type="organism name" value="mouse"/>
</dbReference>
<dbReference type="AGR" id="MGI:1933141"/>
<dbReference type="CTD" id="113444"/>
<dbReference type="MGI" id="MGI:1933141">
    <property type="gene designation" value="Smim12"/>
</dbReference>
<dbReference type="VEuPathDB" id="HostDB:ENSMUSG00000042380"/>
<dbReference type="eggNOG" id="ENOG502S2AD">
    <property type="taxonomic scope" value="Eukaryota"/>
</dbReference>
<dbReference type="GeneTree" id="ENSGT00390000009435"/>
<dbReference type="HOGENOM" id="CLU_160787_0_0_1"/>
<dbReference type="InParanoid" id="Q78RX3"/>
<dbReference type="OMA" id="YHLEWFL"/>
<dbReference type="OrthoDB" id="10052506at2759"/>
<dbReference type="PhylomeDB" id="Q78RX3"/>
<dbReference type="TreeFam" id="TF328614"/>
<dbReference type="BioGRID-ORCS" id="80284">
    <property type="hits" value="1 hit in 76 CRISPR screens"/>
</dbReference>
<dbReference type="ChiTaRS" id="Smim12">
    <property type="organism name" value="mouse"/>
</dbReference>
<dbReference type="PRO" id="PR:Q78RX3"/>
<dbReference type="Proteomes" id="UP000000589">
    <property type="component" value="Chromosome 4"/>
</dbReference>
<dbReference type="RNAct" id="Q78RX3">
    <property type="molecule type" value="protein"/>
</dbReference>
<dbReference type="Bgee" id="ENSMUSG00000042380">
    <property type="expression patterns" value="Expressed in interventricular septum and 255 other cell types or tissues"/>
</dbReference>
<dbReference type="GO" id="GO:0016020">
    <property type="term" value="C:membrane"/>
    <property type="evidence" value="ECO:0007669"/>
    <property type="project" value="UniProtKB-SubCell"/>
</dbReference>
<dbReference type="InterPro" id="IPR031933">
    <property type="entry name" value="UPF0767"/>
</dbReference>
<dbReference type="PANTHER" id="PTHR28599">
    <property type="entry name" value="SMALL INTEGRAL MEMBRANE PROTEIN 12"/>
    <property type="match status" value="1"/>
</dbReference>
<dbReference type="PANTHER" id="PTHR28599:SF1">
    <property type="entry name" value="SMALL INTEGRAL MEMBRANE PROTEIN 12"/>
    <property type="match status" value="1"/>
</dbReference>
<dbReference type="Pfam" id="PF15990">
    <property type="entry name" value="UPF0767"/>
    <property type="match status" value="1"/>
</dbReference>
<organism>
    <name type="scientific">Mus musculus</name>
    <name type="common">Mouse</name>
    <dbReference type="NCBI Taxonomy" id="10090"/>
    <lineage>
        <taxon>Eukaryota</taxon>
        <taxon>Metazoa</taxon>
        <taxon>Chordata</taxon>
        <taxon>Craniata</taxon>
        <taxon>Vertebrata</taxon>
        <taxon>Euteleostomi</taxon>
        <taxon>Mammalia</taxon>
        <taxon>Eutheria</taxon>
        <taxon>Euarchontoglires</taxon>
        <taxon>Glires</taxon>
        <taxon>Rodentia</taxon>
        <taxon>Myomorpha</taxon>
        <taxon>Muroidea</taxon>
        <taxon>Muridae</taxon>
        <taxon>Murinae</taxon>
        <taxon>Mus</taxon>
        <taxon>Mus</taxon>
    </lineage>
</organism>
<name>SIM12_MOUSE</name>
<sequence>MWPVLWTVVRTYAPYVTFPVAFVVGAVGYHLEWFIRGKTPQPVEEEKSILERREDRKLDEMLGKDHTQVVSLKDKLEFAPKAVLNRNRPEKN</sequence>
<evidence type="ECO:0000255" key="1"/>
<evidence type="ECO:0000305" key="2"/>
<proteinExistence type="inferred from homology"/>
<keyword id="KW-0472">Membrane</keyword>
<keyword id="KW-1185">Reference proteome</keyword>
<keyword id="KW-0812">Transmembrane</keyword>
<keyword id="KW-1133">Transmembrane helix</keyword>
<reference key="1">
    <citation type="journal article" date="2005" name="Science">
        <title>The transcriptional landscape of the mammalian genome.</title>
        <authorList>
            <person name="Carninci P."/>
            <person name="Kasukawa T."/>
            <person name="Katayama S."/>
            <person name="Gough J."/>
            <person name="Frith M.C."/>
            <person name="Maeda N."/>
            <person name="Oyama R."/>
            <person name="Ravasi T."/>
            <person name="Lenhard B."/>
            <person name="Wells C."/>
            <person name="Kodzius R."/>
            <person name="Shimokawa K."/>
            <person name="Bajic V.B."/>
            <person name="Brenner S.E."/>
            <person name="Batalov S."/>
            <person name="Forrest A.R."/>
            <person name="Zavolan M."/>
            <person name="Davis M.J."/>
            <person name="Wilming L.G."/>
            <person name="Aidinis V."/>
            <person name="Allen J.E."/>
            <person name="Ambesi-Impiombato A."/>
            <person name="Apweiler R."/>
            <person name="Aturaliya R.N."/>
            <person name="Bailey T.L."/>
            <person name="Bansal M."/>
            <person name="Baxter L."/>
            <person name="Beisel K.W."/>
            <person name="Bersano T."/>
            <person name="Bono H."/>
            <person name="Chalk A.M."/>
            <person name="Chiu K.P."/>
            <person name="Choudhary V."/>
            <person name="Christoffels A."/>
            <person name="Clutterbuck D.R."/>
            <person name="Crowe M.L."/>
            <person name="Dalla E."/>
            <person name="Dalrymple B.P."/>
            <person name="de Bono B."/>
            <person name="Della Gatta G."/>
            <person name="di Bernardo D."/>
            <person name="Down T."/>
            <person name="Engstrom P."/>
            <person name="Fagiolini M."/>
            <person name="Faulkner G."/>
            <person name="Fletcher C.F."/>
            <person name="Fukushima T."/>
            <person name="Furuno M."/>
            <person name="Futaki S."/>
            <person name="Gariboldi M."/>
            <person name="Georgii-Hemming P."/>
            <person name="Gingeras T.R."/>
            <person name="Gojobori T."/>
            <person name="Green R.E."/>
            <person name="Gustincich S."/>
            <person name="Harbers M."/>
            <person name="Hayashi Y."/>
            <person name="Hensch T.K."/>
            <person name="Hirokawa N."/>
            <person name="Hill D."/>
            <person name="Huminiecki L."/>
            <person name="Iacono M."/>
            <person name="Ikeo K."/>
            <person name="Iwama A."/>
            <person name="Ishikawa T."/>
            <person name="Jakt M."/>
            <person name="Kanapin A."/>
            <person name="Katoh M."/>
            <person name="Kawasawa Y."/>
            <person name="Kelso J."/>
            <person name="Kitamura H."/>
            <person name="Kitano H."/>
            <person name="Kollias G."/>
            <person name="Krishnan S.P."/>
            <person name="Kruger A."/>
            <person name="Kummerfeld S.K."/>
            <person name="Kurochkin I.V."/>
            <person name="Lareau L.F."/>
            <person name="Lazarevic D."/>
            <person name="Lipovich L."/>
            <person name="Liu J."/>
            <person name="Liuni S."/>
            <person name="McWilliam S."/>
            <person name="Madan Babu M."/>
            <person name="Madera M."/>
            <person name="Marchionni L."/>
            <person name="Matsuda H."/>
            <person name="Matsuzawa S."/>
            <person name="Miki H."/>
            <person name="Mignone F."/>
            <person name="Miyake S."/>
            <person name="Morris K."/>
            <person name="Mottagui-Tabar S."/>
            <person name="Mulder N."/>
            <person name="Nakano N."/>
            <person name="Nakauchi H."/>
            <person name="Ng P."/>
            <person name="Nilsson R."/>
            <person name="Nishiguchi S."/>
            <person name="Nishikawa S."/>
            <person name="Nori F."/>
            <person name="Ohara O."/>
            <person name="Okazaki Y."/>
            <person name="Orlando V."/>
            <person name="Pang K.C."/>
            <person name="Pavan W.J."/>
            <person name="Pavesi G."/>
            <person name="Pesole G."/>
            <person name="Petrovsky N."/>
            <person name="Piazza S."/>
            <person name="Reed J."/>
            <person name="Reid J.F."/>
            <person name="Ring B.Z."/>
            <person name="Ringwald M."/>
            <person name="Rost B."/>
            <person name="Ruan Y."/>
            <person name="Salzberg S.L."/>
            <person name="Sandelin A."/>
            <person name="Schneider C."/>
            <person name="Schoenbach C."/>
            <person name="Sekiguchi K."/>
            <person name="Semple C.A."/>
            <person name="Seno S."/>
            <person name="Sessa L."/>
            <person name="Sheng Y."/>
            <person name="Shibata Y."/>
            <person name="Shimada H."/>
            <person name="Shimada K."/>
            <person name="Silva D."/>
            <person name="Sinclair B."/>
            <person name="Sperling S."/>
            <person name="Stupka E."/>
            <person name="Sugiura K."/>
            <person name="Sultana R."/>
            <person name="Takenaka Y."/>
            <person name="Taki K."/>
            <person name="Tammoja K."/>
            <person name="Tan S.L."/>
            <person name="Tang S."/>
            <person name="Taylor M.S."/>
            <person name="Tegner J."/>
            <person name="Teichmann S.A."/>
            <person name="Ueda H.R."/>
            <person name="van Nimwegen E."/>
            <person name="Verardo R."/>
            <person name="Wei C.L."/>
            <person name="Yagi K."/>
            <person name="Yamanishi H."/>
            <person name="Zabarovsky E."/>
            <person name="Zhu S."/>
            <person name="Zimmer A."/>
            <person name="Hide W."/>
            <person name="Bult C."/>
            <person name="Grimmond S.M."/>
            <person name="Teasdale R.D."/>
            <person name="Liu E.T."/>
            <person name="Brusic V."/>
            <person name="Quackenbush J."/>
            <person name="Wahlestedt C."/>
            <person name="Mattick J.S."/>
            <person name="Hume D.A."/>
            <person name="Kai C."/>
            <person name="Sasaki D."/>
            <person name="Tomaru Y."/>
            <person name="Fukuda S."/>
            <person name="Kanamori-Katayama M."/>
            <person name="Suzuki M."/>
            <person name="Aoki J."/>
            <person name="Arakawa T."/>
            <person name="Iida J."/>
            <person name="Imamura K."/>
            <person name="Itoh M."/>
            <person name="Kato T."/>
            <person name="Kawaji H."/>
            <person name="Kawagashira N."/>
            <person name="Kawashima T."/>
            <person name="Kojima M."/>
            <person name="Kondo S."/>
            <person name="Konno H."/>
            <person name="Nakano K."/>
            <person name="Ninomiya N."/>
            <person name="Nishio T."/>
            <person name="Okada M."/>
            <person name="Plessy C."/>
            <person name="Shibata K."/>
            <person name="Shiraki T."/>
            <person name="Suzuki S."/>
            <person name="Tagami M."/>
            <person name="Waki K."/>
            <person name="Watahiki A."/>
            <person name="Okamura-Oho Y."/>
            <person name="Suzuki H."/>
            <person name="Kawai J."/>
            <person name="Hayashizaki Y."/>
        </authorList>
    </citation>
    <scope>NUCLEOTIDE SEQUENCE [LARGE SCALE MRNA]</scope>
    <source>
        <strain>C57BL/6J</strain>
        <tissue>Liver</tissue>
        <tissue>Tongue</tissue>
    </source>
</reference>
<reference key="2">
    <citation type="journal article" date="2009" name="PLoS Biol.">
        <title>Lineage-specific biology revealed by a finished genome assembly of the mouse.</title>
        <authorList>
            <person name="Church D.M."/>
            <person name="Goodstadt L."/>
            <person name="Hillier L.W."/>
            <person name="Zody M.C."/>
            <person name="Goldstein S."/>
            <person name="She X."/>
            <person name="Bult C.J."/>
            <person name="Agarwala R."/>
            <person name="Cherry J.L."/>
            <person name="DiCuccio M."/>
            <person name="Hlavina W."/>
            <person name="Kapustin Y."/>
            <person name="Meric P."/>
            <person name="Maglott D."/>
            <person name="Birtle Z."/>
            <person name="Marques A.C."/>
            <person name="Graves T."/>
            <person name="Zhou S."/>
            <person name="Teague B."/>
            <person name="Potamousis K."/>
            <person name="Churas C."/>
            <person name="Place M."/>
            <person name="Herschleb J."/>
            <person name="Runnheim R."/>
            <person name="Forrest D."/>
            <person name="Amos-Landgraf J."/>
            <person name="Schwartz D.C."/>
            <person name="Cheng Z."/>
            <person name="Lindblad-Toh K."/>
            <person name="Eichler E.E."/>
            <person name="Ponting C.P."/>
        </authorList>
    </citation>
    <scope>NUCLEOTIDE SEQUENCE [LARGE SCALE GENOMIC DNA]</scope>
    <source>
        <strain>C57BL/6J</strain>
    </source>
</reference>
<reference key="3">
    <citation type="submission" date="2005-09" db="EMBL/GenBank/DDBJ databases">
        <authorList>
            <person name="Mural R.J."/>
            <person name="Adams M.D."/>
            <person name="Myers E.W."/>
            <person name="Smith H.O."/>
            <person name="Venter J.C."/>
        </authorList>
    </citation>
    <scope>NUCLEOTIDE SEQUENCE [LARGE SCALE GENOMIC DNA]</scope>
</reference>
<reference key="4">
    <citation type="journal article" date="2004" name="Genome Res.">
        <title>The status, quality, and expansion of the NIH full-length cDNA project: the Mammalian Gene Collection (MGC).</title>
        <authorList>
            <consortium name="The MGC Project Team"/>
        </authorList>
    </citation>
    <scope>NUCLEOTIDE SEQUENCE [LARGE SCALE MRNA]</scope>
    <source>
        <tissue>Brain</tissue>
    </source>
</reference>
<feature type="chain" id="PRO_0000414320" description="Small integral membrane protein 12">
    <location>
        <begin position="1"/>
        <end position="92"/>
    </location>
</feature>
<feature type="transmembrane region" description="Helical" evidence="1">
    <location>
        <begin position="15"/>
        <end position="34"/>
    </location>
</feature>
<accession>Q78RX3</accession>
<gene>
    <name type="primary">Smim12</name>
</gene>